<name>SYH_FRATN</name>
<proteinExistence type="inferred from homology"/>
<evidence type="ECO:0000255" key="1">
    <source>
        <dbReference type="HAMAP-Rule" id="MF_00127"/>
    </source>
</evidence>
<gene>
    <name evidence="1" type="primary">hisS</name>
    <name type="ordered locus">FTN_1658</name>
</gene>
<accession>A0Q8F1</accession>
<protein>
    <recommendedName>
        <fullName evidence="1">Histidine--tRNA ligase</fullName>
        <ecNumber evidence="1">6.1.1.21</ecNumber>
    </recommendedName>
    <alternativeName>
        <fullName evidence="1">Histidyl-tRNA synthetase</fullName>
        <shortName evidence="1">HisRS</shortName>
    </alternativeName>
</protein>
<sequence>MSKLTIVRGFNDVLPLDSYKWQFLESKVKLILDRYNYSETRLPIVERSELFHRSVGESSDIVSKETYDFQDRNGDSLTLRPEGTAGCVRMVIENNLATRGQTQKLWYCGPMFRYERPQKGRYRQFYQLGVEAYGFDGIAIDLEVIAIAWSLFKELGISEYVTLELNSLGSSLNRQEYTQALLQYLKPYHAELDEDSIKRLDKNPLRILDSKIEKTQKILANAPKLMDFIDHDLRLRFKQTCQYLDALGVRYKLNENLVRGLDYYTGLVFEWTTDKLGSQSAICAGGRYDGLVENLGGQKTAAIGFAIGMERLLLLLEDLGKLPNQDNACDVFFILDSAQLHQSLAIVENIRQELPQLKIDMDLKFGSFKSQFKKADKSGAKVAIIIGQDELDNGFAGIKFLQQNEEQQQVAFNELINFLER</sequence>
<keyword id="KW-0030">Aminoacyl-tRNA synthetase</keyword>
<keyword id="KW-0067">ATP-binding</keyword>
<keyword id="KW-0963">Cytoplasm</keyword>
<keyword id="KW-0436">Ligase</keyword>
<keyword id="KW-0547">Nucleotide-binding</keyword>
<keyword id="KW-0648">Protein biosynthesis</keyword>
<comment type="catalytic activity">
    <reaction evidence="1">
        <text>tRNA(His) + L-histidine + ATP = L-histidyl-tRNA(His) + AMP + diphosphate + H(+)</text>
        <dbReference type="Rhea" id="RHEA:17313"/>
        <dbReference type="Rhea" id="RHEA-COMP:9665"/>
        <dbReference type="Rhea" id="RHEA-COMP:9689"/>
        <dbReference type="ChEBI" id="CHEBI:15378"/>
        <dbReference type="ChEBI" id="CHEBI:30616"/>
        <dbReference type="ChEBI" id="CHEBI:33019"/>
        <dbReference type="ChEBI" id="CHEBI:57595"/>
        <dbReference type="ChEBI" id="CHEBI:78442"/>
        <dbReference type="ChEBI" id="CHEBI:78527"/>
        <dbReference type="ChEBI" id="CHEBI:456215"/>
        <dbReference type="EC" id="6.1.1.21"/>
    </reaction>
</comment>
<comment type="subunit">
    <text evidence="1">Homodimer.</text>
</comment>
<comment type="subcellular location">
    <subcellularLocation>
        <location evidence="1">Cytoplasm</location>
    </subcellularLocation>
</comment>
<comment type="similarity">
    <text evidence="1">Belongs to the class-II aminoacyl-tRNA synthetase family.</text>
</comment>
<dbReference type="EC" id="6.1.1.21" evidence="1"/>
<dbReference type="EMBL" id="CP000439">
    <property type="protein sequence ID" value="ABK90516.1"/>
    <property type="molecule type" value="Genomic_DNA"/>
</dbReference>
<dbReference type="RefSeq" id="WP_003041277.1">
    <property type="nucleotide sequence ID" value="NC_008601.1"/>
</dbReference>
<dbReference type="SMR" id="A0Q8F1"/>
<dbReference type="KEGG" id="ftn:FTN_1658"/>
<dbReference type="KEGG" id="ftx:AW25_330"/>
<dbReference type="BioCyc" id="FTUL401614:G1G75-1719-MONOMER"/>
<dbReference type="Proteomes" id="UP000000762">
    <property type="component" value="Chromosome"/>
</dbReference>
<dbReference type="GO" id="GO:0005737">
    <property type="term" value="C:cytoplasm"/>
    <property type="evidence" value="ECO:0007669"/>
    <property type="project" value="UniProtKB-SubCell"/>
</dbReference>
<dbReference type="GO" id="GO:0005524">
    <property type="term" value="F:ATP binding"/>
    <property type="evidence" value="ECO:0007669"/>
    <property type="project" value="UniProtKB-UniRule"/>
</dbReference>
<dbReference type="GO" id="GO:0004821">
    <property type="term" value="F:histidine-tRNA ligase activity"/>
    <property type="evidence" value="ECO:0007669"/>
    <property type="project" value="UniProtKB-UniRule"/>
</dbReference>
<dbReference type="GO" id="GO:0006427">
    <property type="term" value="P:histidyl-tRNA aminoacylation"/>
    <property type="evidence" value="ECO:0007669"/>
    <property type="project" value="UniProtKB-UniRule"/>
</dbReference>
<dbReference type="CDD" id="cd00773">
    <property type="entry name" value="HisRS-like_core"/>
    <property type="match status" value="1"/>
</dbReference>
<dbReference type="FunFam" id="3.30.930.10:FF:000005">
    <property type="entry name" value="Histidine--tRNA ligase"/>
    <property type="match status" value="1"/>
</dbReference>
<dbReference type="Gene3D" id="3.40.50.800">
    <property type="entry name" value="Anticodon-binding domain"/>
    <property type="match status" value="1"/>
</dbReference>
<dbReference type="Gene3D" id="3.30.930.10">
    <property type="entry name" value="Bira Bifunctional Protein, Domain 2"/>
    <property type="match status" value="1"/>
</dbReference>
<dbReference type="HAMAP" id="MF_00127">
    <property type="entry name" value="His_tRNA_synth"/>
    <property type="match status" value="1"/>
</dbReference>
<dbReference type="InterPro" id="IPR006195">
    <property type="entry name" value="aa-tRNA-synth_II"/>
</dbReference>
<dbReference type="InterPro" id="IPR045864">
    <property type="entry name" value="aa-tRNA-synth_II/BPL/LPL"/>
</dbReference>
<dbReference type="InterPro" id="IPR004154">
    <property type="entry name" value="Anticodon-bd"/>
</dbReference>
<dbReference type="InterPro" id="IPR036621">
    <property type="entry name" value="Anticodon-bd_dom_sf"/>
</dbReference>
<dbReference type="InterPro" id="IPR015807">
    <property type="entry name" value="His-tRNA-ligase"/>
</dbReference>
<dbReference type="InterPro" id="IPR041715">
    <property type="entry name" value="HisRS-like_core"/>
</dbReference>
<dbReference type="InterPro" id="IPR004516">
    <property type="entry name" value="HisRS/HisZ"/>
</dbReference>
<dbReference type="NCBIfam" id="TIGR00442">
    <property type="entry name" value="hisS"/>
    <property type="match status" value="1"/>
</dbReference>
<dbReference type="PANTHER" id="PTHR43707:SF1">
    <property type="entry name" value="HISTIDINE--TRNA LIGASE, MITOCHONDRIAL-RELATED"/>
    <property type="match status" value="1"/>
</dbReference>
<dbReference type="PANTHER" id="PTHR43707">
    <property type="entry name" value="HISTIDYL-TRNA SYNTHETASE"/>
    <property type="match status" value="1"/>
</dbReference>
<dbReference type="Pfam" id="PF03129">
    <property type="entry name" value="HGTP_anticodon"/>
    <property type="match status" value="1"/>
</dbReference>
<dbReference type="Pfam" id="PF13393">
    <property type="entry name" value="tRNA-synt_His"/>
    <property type="match status" value="1"/>
</dbReference>
<dbReference type="PIRSF" id="PIRSF001549">
    <property type="entry name" value="His-tRNA_synth"/>
    <property type="match status" value="1"/>
</dbReference>
<dbReference type="SUPFAM" id="SSF52954">
    <property type="entry name" value="Class II aaRS ABD-related"/>
    <property type="match status" value="1"/>
</dbReference>
<dbReference type="SUPFAM" id="SSF55681">
    <property type="entry name" value="Class II aaRS and biotin synthetases"/>
    <property type="match status" value="1"/>
</dbReference>
<dbReference type="PROSITE" id="PS50862">
    <property type="entry name" value="AA_TRNA_LIGASE_II"/>
    <property type="match status" value="1"/>
</dbReference>
<feature type="chain" id="PRO_1000016363" description="Histidine--tRNA ligase">
    <location>
        <begin position="1"/>
        <end position="421"/>
    </location>
</feature>
<organism>
    <name type="scientific">Francisella tularensis subsp. novicida (strain U112)</name>
    <dbReference type="NCBI Taxonomy" id="401614"/>
    <lineage>
        <taxon>Bacteria</taxon>
        <taxon>Pseudomonadati</taxon>
        <taxon>Pseudomonadota</taxon>
        <taxon>Gammaproteobacteria</taxon>
        <taxon>Thiotrichales</taxon>
        <taxon>Francisellaceae</taxon>
        <taxon>Francisella</taxon>
    </lineage>
</organism>
<reference key="1">
    <citation type="journal article" date="2007" name="Genome Biol.">
        <title>Comparison of Francisella tularensis genomes reveals evolutionary events associated with the emergence of human pathogenic strains.</title>
        <authorList>
            <person name="Rohmer L."/>
            <person name="Fong C."/>
            <person name="Abmayr S."/>
            <person name="Wasnick M."/>
            <person name="Larson Freeman T.J."/>
            <person name="Radey M."/>
            <person name="Guina T."/>
            <person name="Svensson K."/>
            <person name="Hayden H.S."/>
            <person name="Jacobs M."/>
            <person name="Gallagher L.A."/>
            <person name="Manoil C."/>
            <person name="Ernst R.K."/>
            <person name="Drees B."/>
            <person name="Buckley D."/>
            <person name="Haugen E."/>
            <person name="Bovee D."/>
            <person name="Zhou Y."/>
            <person name="Chang J."/>
            <person name="Levy R."/>
            <person name="Lim R."/>
            <person name="Gillett W."/>
            <person name="Guenthener D."/>
            <person name="Kang A."/>
            <person name="Shaffer S.A."/>
            <person name="Taylor G."/>
            <person name="Chen J."/>
            <person name="Gallis B."/>
            <person name="D'Argenio D.A."/>
            <person name="Forsman M."/>
            <person name="Olson M.V."/>
            <person name="Goodlett D.R."/>
            <person name="Kaul R."/>
            <person name="Miller S.I."/>
            <person name="Brittnacher M.J."/>
        </authorList>
    </citation>
    <scope>NUCLEOTIDE SEQUENCE [LARGE SCALE GENOMIC DNA]</scope>
    <source>
        <strain>U112</strain>
    </source>
</reference>